<dbReference type="EMBL" id="U91943">
    <property type="protein sequence ID" value="AAB51378.1"/>
    <property type="molecule type" value="Genomic_DNA"/>
</dbReference>
<dbReference type="EMBL" id="Z46796">
    <property type="protein sequence ID" value="CAA86801.1"/>
    <property type="molecule type" value="Genomic_DNA"/>
</dbReference>
<dbReference type="EMBL" id="X82086">
    <property type="protein sequence ID" value="CAA57606.1"/>
    <property type="molecule type" value="Genomic_DNA"/>
</dbReference>
<dbReference type="EMBL" id="Z74375">
    <property type="protein sequence ID" value="CAA98898.1"/>
    <property type="molecule type" value="Genomic_DNA"/>
</dbReference>
<dbReference type="EMBL" id="AY557662">
    <property type="protein sequence ID" value="AAS55988.1"/>
    <property type="molecule type" value="Genomic_DNA"/>
</dbReference>
<dbReference type="EMBL" id="BK006938">
    <property type="protein sequence ID" value="DAA11925.1"/>
    <property type="molecule type" value="Genomic_DNA"/>
</dbReference>
<dbReference type="PIR" id="S48766">
    <property type="entry name" value="S48766"/>
</dbReference>
<dbReference type="RefSeq" id="NP_010364.1">
    <property type="nucleotide sequence ID" value="NM_001180387.1"/>
</dbReference>
<dbReference type="SMR" id="P38958"/>
<dbReference type="BioGRID" id="32134">
    <property type="interactions" value="66"/>
</dbReference>
<dbReference type="DIP" id="DIP-5467N"/>
<dbReference type="FunCoup" id="P38958">
    <property type="interactions" value="41"/>
</dbReference>
<dbReference type="IntAct" id="P38958">
    <property type="interactions" value="1"/>
</dbReference>
<dbReference type="STRING" id="4932.YDR079W"/>
<dbReference type="PaxDb" id="4932-YDR079W"/>
<dbReference type="PeptideAtlas" id="P38958"/>
<dbReference type="EnsemblFungi" id="YDR079W_mRNA">
    <property type="protein sequence ID" value="YDR079W"/>
    <property type="gene ID" value="YDR079W"/>
</dbReference>
<dbReference type="GeneID" id="851651"/>
<dbReference type="KEGG" id="sce:YDR079W"/>
<dbReference type="AGR" id="SGD:S000002486"/>
<dbReference type="SGD" id="S000002486">
    <property type="gene designation" value="PET100"/>
</dbReference>
<dbReference type="VEuPathDB" id="FungiDB:YDR079W"/>
<dbReference type="eggNOG" id="ENOG502S1QV">
    <property type="taxonomic scope" value="Eukaryota"/>
</dbReference>
<dbReference type="HOGENOM" id="CLU_156745_0_0_1"/>
<dbReference type="InParanoid" id="P38958"/>
<dbReference type="OMA" id="MKLPFRY"/>
<dbReference type="OrthoDB" id="18175at2759"/>
<dbReference type="BioCyc" id="YEAST:G3O-29684-MONOMER"/>
<dbReference type="BioGRID-ORCS" id="851651">
    <property type="hits" value="0 hits in 10 CRISPR screens"/>
</dbReference>
<dbReference type="PRO" id="PR:P38958"/>
<dbReference type="Proteomes" id="UP000002311">
    <property type="component" value="Chromosome IV"/>
</dbReference>
<dbReference type="RNAct" id="P38958">
    <property type="molecule type" value="protein"/>
</dbReference>
<dbReference type="GO" id="GO:0005743">
    <property type="term" value="C:mitochondrial inner membrane"/>
    <property type="evidence" value="ECO:0000314"/>
    <property type="project" value="SGD"/>
</dbReference>
<dbReference type="GO" id="GO:0005739">
    <property type="term" value="C:mitochondrion"/>
    <property type="evidence" value="ECO:0007005"/>
    <property type="project" value="SGD"/>
</dbReference>
<dbReference type="GO" id="GO:0051082">
    <property type="term" value="F:unfolded protein binding"/>
    <property type="evidence" value="ECO:0000314"/>
    <property type="project" value="SGD"/>
</dbReference>
<dbReference type="GO" id="GO:0033617">
    <property type="term" value="P:mitochondrial cytochrome c oxidase assembly"/>
    <property type="evidence" value="ECO:0000315"/>
    <property type="project" value="SGD"/>
</dbReference>
<dbReference type="InterPro" id="IPR018625">
    <property type="entry name" value="Pet100"/>
</dbReference>
<dbReference type="PANTHER" id="PTHR33968">
    <property type="entry name" value="PROTEIN PET100 HOMOLOG, MITOCHONDRIAL"/>
    <property type="match status" value="1"/>
</dbReference>
<dbReference type="PANTHER" id="PTHR33968:SF1">
    <property type="entry name" value="PROTEIN PET100 HOMOLOG, MITOCHONDRIAL"/>
    <property type="match status" value="1"/>
</dbReference>
<dbReference type="Pfam" id="PF09803">
    <property type="entry name" value="Pet100"/>
    <property type="match status" value="1"/>
</dbReference>
<evidence type="ECO:0000255" key="1"/>
<evidence type="ECO:0000269" key="2">
    <source>
    </source>
</evidence>
<evidence type="ECO:0000305" key="3"/>
<reference key="1">
    <citation type="journal article" date="1996" name="J. Biol. Chem.">
        <title>Cloning and characterization of PET100, a gene required for the assembly of yeast cytochrome c oxidase.</title>
        <authorList>
            <person name="Church C."/>
            <person name="Chapon C."/>
            <person name="Poyton R.O."/>
        </authorList>
    </citation>
    <scope>NUCLEOTIDE SEQUENCE [GENOMIC DNA]</scope>
    <scope>CHARACTERIZATION</scope>
</reference>
<reference key="2">
    <citation type="journal article" date="1997" name="Nature">
        <title>The nucleotide sequence of Saccharomyces cerevisiae chromosome IV.</title>
        <authorList>
            <person name="Jacq C."/>
            <person name="Alt-Moerbe J."/>
            <person name="Andre B."/>
            <person name="Arnold W."/>
            <person name="Bahr A."/>
            <person name="Ballesta J.P.G."/>
            <person name="Bargues M."/>
            <person name="Baron L."/>
            <person name="Becker A."/>
            <person name="Biteau N."/>
            <person name="Bloecker H."/>
            <person name="Blugeon C."/>
            <person name="Boskovic J."/>
            <person name="Brandt P."/>
            <person name="Brueckner M."/>
            <person name="Buitrago M.J."/>
            <person name="Coster F."/>
            <person name="Delaveau T."/>
            <person name="del Rey F."/>
            <person name="Dujon B."/>
            <person name="Eide L.G."/>
            <person name="Garcia-Cantalejo J.M."/>
            <person name="Goffeau A."/>
            <person name="Gomez-Peris A."/>
            <person name="Granotier C."/>
            <person name="Hanemann V."/>
            <person name="Hankeln T."/>
            <person name="Hoheisel J.D."/>
            <person name="Jaeger W."/>
            <person name="Jimenez A."/>
            <person name="Jonniaux J.-L."/>
            <person name="Kraemer C."/>
            <person name="Kuester H."/>
            <person name="Laamanen P."/>
            <person name="Legros Y."/>
            <person name="Louis E.J."/>
            <person name="Moeller-Rieker S."/>
            <person name="Monnet A."/>
            <person name="Moro M."/>
            <person name="Mueller-Auer S."/>
            <person name="Nussbaumer B."/>
            <person name="Paricio N."/>
            <person name="Paulin L."/>
            <person name="Perea J."/>
            <person name="Perez-Alonso M."/>
            <person name="Perez-Ortin J.E."/>
            <person name="Pohl T.M."/>
            <person name="Prydz H."/>
            <person name="Purnelle B."/>
            <person name="Rasmussen S.W."/>
            <person name="Remacha M.A."/>
            <person name="Revuelta J.L."/>
            <person name="Rieger M."/>
            <person name="Salom D."/>
            <person name="Saluz H.P."/>
            <person name="Saiz J.E."/>
            <person name="Saren A.-M."/>
            <person name="Schaefer M."/>
            <person name="Scharfe M."/>
            <person name="Schmidt E.R."/>
            <person name="Schneider C."/>
            <person name="Scholler P."/>
            <person name="Schwarz S."/>
            <person name="Soler-Mira A."/>
            <person name="Urrestarazu L.A."/>
            <person name="Verhasselt P."/>
            <person name="Vissers S."/>
            <person name="Voet M."/>
            <person name="Volckaert G."/>
            <person name="Wagner G."/>
            <person name="Wambutt R."/>
            <person name="Wedler E."/>
            <person name="Wedler H."/>
            <person name="Woelfl S."/>
            <person name="Harris D.E."/>
            <person name="Bowman S."/>
            <person name="Brown D."/>
            <person name="Churcher C.M."/>
            <person name="Connor R."/>
            <person name="Dedman K."/>
            <person name="Gentles S."/>
            <person name="Hamlin N."/>
            <person name="Hunt S."/>
            <person name="Jones L."/>
            <person name="McDonald S."/>
            <person name="Murphy L.D."/>
            <person name="Niblett D."/>
            <person name="Odell C."/>
            <person name="Oliver K."/>
            <person name="Rajandream M.A."/>
            <person name="Richards C."/>
            <person name="Shore L."/>
            <person name="Walsh S.V."/>
            <person name="Barrell B.G."/>
            <person name="Dietrich F.S."/>
            <person name="Mulligan J.T."/>
            <person name="Allen E."/>
            <person name="Araujo R."/>
            <person name="Aviles E."/>
            <person name="Berno A."/>
            <person name="Carpenter J."/>
            <person name="Chen E."/>
            <person name="Cherry J.M."/>
            <person name="Chung E."/>
            <person name="Duncan M."/>
            <person name="Hunicke-Smith S."/>
            <person name="Hyman R.W."/>
            <person name="Komp C."/>
            <person name="Lashkari D."/>
            <person name="Lew H."/>
            <person name="Lin D."/>
            <person name="Mosedale D."/>
            <person name="Nakahara K."/>
            <person name="Namath A."/>
            <person name="Oefner P."/>
            <person name="Oh C."/>
            <person name="Petel F.X."/>
            <person name="Roberts D."/>
            <person name="Schramm S."/>
            <person name="Schroeder M."/>
            <person name="Shogren T."/>
            <person name="Shroff N."/>
            <person name="Winant A."/>
            <person name="Yelton M.A."/>
            <person name="Botstein D."/>
            <person name="Davis R.W."/>
            <person name="Johnston M."/>
            <person name="Andrews S."/>
            <person name="Brinkman R."/>
            <person name="Cooper J."/>
            <person name="Ding H."/>
            <person name="Du Z."/>
            <person name="Favello A."/>
            <person name="Fulton L."/>
            <person name="Gattung S."/>
            <person name="Greco T."/>
            <person name="Hallsworth K."/>
            <person name="Hawkins J."/>
            <person name="Hillier L.W."/>
            <person name="Jier M."/>
            <person name="Johnson D."/>
            <person name="Johnston L."/>
            <person name="Kirsten J."/>
            <person name="Kucaba T."/>
            <person name="Langston Y."/>
            <person name="Latreille P."/>
            <person name="Le T."/>
            <person name="Mardis E."/>
            <person name="Menezes S."/>
            <person name="Miller N."/>
            <person name="Nhan M."/>
            <person name="Pauley A."/>
            <person name="Peluso D."/>
            <person name="Rifkin L."/>
            <person name="Riles L."/>
            <person name="Taich A."/>
            <person name="Trevaskis E."/>
            <person name="Vignati D."/>
            <person name="Wilcox L."/>
            <person name="Wohldman P."/>
            <person name="Vaudin M."/>
            <person name="Wilson R."/>
            <person name="Waterston R."/>
            <person name="Albermann K."/>
            <person name="Hani J."/>
            <person name="Heumann K."/>
            <person name="Kleine K."/>
            <person name="Mewes H.-W."/>
            <person name="Zollner A."/>
            <person name="Zaccaria P."/>
        </authorList>
    </citation>
    <scope>NUCLEOTIDE SEQUENCE [LARGE SCALE GENOMIC DNA]</scope>
    <source>
        <strain>ATCC 204508 / S288c</strain>
    </source>
</reference>
<reference key="3">
    <citation type="journal article" date="2014" name="G3 (Bethesda)">
        <title>The reference genome sequence of Saccharomyces cerevisiae: Then and now.</title>
        <authorList>
            <person name="Engel S.R."/>
            <person name="Dietrich F.S."/>
            <person name="Fisk D.G."/>
            <person name="Binkley G."/>
            <person name="Balakrishnan R."/>
            <person name="Costanzo M.C."/>
            <person name="Dwight S.S."/>
            <person name="Hitz B.C."/>
            <person name="Karra K."/>
            <person name="Nash R.S."/>
            <person name="Weng S."/>
            <person name="Wong E.D."/>
            <person name="Lloyd P."/>
            <person name="Skrzypek M.S."/>
            <person name="Miyasato S.R."/>
            <person name="Simison M."/>
            <person name="Cherry J.M."/>
        </authorList>
    </citation>
    <scope>GENOME REANNOTATION</scope>
    <source>
        <strain>ATCC 204508 / S288c</strain>
    </source>
</reference>
<reference key="4">
    <citation type="journal article" date="2007" name="Genome Res.">
        <title>Approaching a complete repository of sequence-verified protein-encoding clones for Saccharomyces cerevisiae.</title>
        <authorList>
            <person name="Hu Y."/>
            <person name="Rolfs A."/>
            <person name="Bhullar B."/>
            <person name="Murthy T.V.S."/>
            <person name="Zhu C."/>
            <person name="Berger M.F."/>
            <person name="Camargo A.A."/>
            <person name="Kelley F."/>
            <person name="McCarron S."/>
            <person name="Jepson D."/>
            <person name="Richardson A."/>
            <person name="Raphael J."/>
            <person name="Moreira D."/>
            <person name="Taycher E."/>
            <person name="Zuo D."/>
            <person name="Mohr S."/>
            <person name="Kane M.F."/>
            <person name="Williamson J."/>
            <person name="Simpson A.J.G."/>
            <person name="Bulyk M.L."/>
            <person name="Harlow E."/>
            <person name="Marsischky G."/>
            <person name="Kolodner R.D."/>
            <person name="LaBaer J."/>
        </authorList>
    </citation>
    <scope>NUCLEOTIDE SEQUENCE [GENOMIC DNA]</scope>
    <source>
        <strain>ATCC 204508 / S288c</strain>
    </source>
</reference>
<reference key="5">
    <citation type="journal article" date="2003" name="Nature">
        <title>Global analysis of protein expression in yeast.</title>
        <authorList>
            <person name="Ghaemmaghami S."/>
            <person name="Huh W.-K."/>
            <person name="Bower K."/>
            <person name="Howson R.W."/>
            <person name="Belle A."/>
            <person name="Dephoure N."/>
            <person name="O'Shea E.K."/>
            <person name="Weissman J.S."/>
        </authorList>
    </citation>
    <scope>LEVEL OF PROTEIN EXPRESSION [LARGE SCALE ANALYSIS]</scope>
</reference>
<accession>P38958</accession>
<accession>D6VS65</accession>
<organism>
    <name type="scientific">Saccharomyces cerevisiae (strain ATCC 204508 / S288c)</name>
    <name type="common">Baker's yeast</name>
    <dbReference type="NCBI Taxonomy" id="559292"/>
    <lineage>
        <taxon>Eukaryota</taxon>
        <taxon>Fungi</taxon>
        <taxon>Dikarya</taxon>
        <taxon>Ascomycota</taxon>
        <taxon>Saccharomycotina</taxon>
        <taxon>Saccharomycetes</taxon>
        <taxon>Saccharomycetales</taxon>
        <taxon>Saccharomycetaceae</taxon>
        <taxon>Saccharomyces</taxon>
    </lineage>
</organism>
<sequence>MGLFNNFKFKYTRAQLEIFRFSFCLLAPVAVMYYIGTDTDKKLNVPGFWPDPATLNQIPKEPYEIKAELARMKKERLEKRLRLEKKIQEEFGLDLEEEKEKIKRDLALKKG</sequence>
<protein>
    <recommendedName>
        <fullName>Protein PET100, mitochondrial</fullName>
    </recommendedName>
</protein>
<comment type="function">
    <text>Required for the biogenesis of cytochrome c oxidase. Probably for its assembly into an active holoenzyme.</text>
</comment>
<comment type="subcellular location">
    <subcellularLocation>
        <location evidence="3">Mitochondrion membrane</location>
        <topology evidence="3">Single-pass membrane protein</topology>
    </subcellularLocation>
</comment>
<comment type="miscellaneous">
    <text evidence="2">Present with 468 molecules/cell in log phase SD medium.</text>
</comment>
<comment type="similarity">
    <text evidence="3">Belongs to the PET100 family.</text>
</comment>
<name>PT100_YEAST</name>
<proteinExistence type="evidence at protein level"/>
<keyword id="KW-0472">Membrane</keyword>
<keyword id="KW-0496">Mitochondrion</keyword>
<keyword id="KW-1185">Reference proteome</keyword>
<keyword id="KW-0809">Transit peptide</keyword>
<keyword id="KW-0812">Transmembrane</keyword>
<keyword id="KW-1133">Transmembrane helix</keyword>
<gene>
    <name type="primary">PET100</name>
    <name type="ordered locus">YDR079W</name>
    <name type="ORF">D4441</name>
</gene>
<feature type="transit peptide" description="Mitochondrion">
    <location>
        <begin position="1"/>
        <end status="unknown"/>
    </location>
</feature>
<feature type="chain" id="PRO_0000022172" description="Protein PET100, mitochondrial">
    <location>
        <begin status="unknown"/>
        <end position="111"/>
    </location>
</feature>
<feature type="transmembrane region" description="Helical" evidence="1">
    <location>
        <begin position="18"/>
        <end position="36"/>
    </location>
</feature>